<comment type="function">
    <text evidence="1">Molecular chaperone that may interact with a ClpP-like protease involved in degradation of denatured proteins in the chloroplast.</text>
</comment>
<comment type="subcellular location">
    <subcellularLocation>
        <location>Plastid</location>
        <location>Chloroplast</location>
    </subcellularLocation>
</comment>
<comment type="similarity">
    <text evidence="3">Belongs to the ClpA/ClpB family. ClpC subfamily.</text>
</comment>
<reference key="1">
    <citation type="journal article" date="2005" name="BMC Biol.">
        <title>The sequence of rice chromosomes 11 and 12, rich in disease resistance genes and recent gene duplications.</title>
        <authorList>
            <consortium name="The rice chromosomes 11 and 12 sequencing consortia"/>
        </authorList>
    </citation>
    <scope>NUCLEOTIDE SEQUENCE [LARGE SCALE GENOMIC DNA]</scope>
    <source>
        <strain>cv. Nipponbare</strain>
    </source>
</reference>
<reference key="2">
    <citation type="journal article" date="2005" name="Nature">
        <title>The map-based sequence of the rice genome.</title>
        <authorList>
            <consortium name="International rice genome sequencing project (IRGSP)"/>
        </authorList>
    </citation>
    <scope>NUCLEOTIDE SEQUENCE [LARGE SCALE GENOMIC DNA]</scope>
    <source>
        <strain>cv. Nipponbare</strain>
    </source>
</reference>
<reference key="3">
    <citation type="journal article" date="2013" name="Rice">
        <title>Improvement of the Oryza sativa Nipponbare reference genome using next generation sequence and optical map data.</title>
        <authorList>
            <person name="Kawahara Y."/>
            <person name="de la Bastide M."/>
            <person name="Hamilton J.P."/>
            <person name="Kanamori H."/>
            <person name="McCombie W.R."/>
            <person name="Ouyang S."/>
            <person name="Schwartz D.C."/>
            <person name="Tanaka T."/>
            <person name="Wu J."/>
            <person name="Zhou S."/>
            <person name="Childs K.L."/>
            <person name="Davidson R.M."/>
            <person name="Lin H."/>
            <person name="Quesada-Ocampo L."/>
            <person name="Vaillancourt B."/>
            <person name="Sakai H."/>
            <person name="Lee S.S."/>
            <person name="Kim J."/>
            <person name="Numa H."/>
            <person name="Itoh T."/>
            <person name="Buell C.R."/>
            <person name="Matsumoto T."/>
        </authorList>
    </citation>
    <scope>GENOME REANNOTATION</scope>
    <source>
        <strain>cv. Nipponbare</strain>
    </source>
</reference>
<dbReference type="EMBL" id="AC135498">
    <property type="protein sequence ID" value="AAX96447.1"/>
    <property type="molecule type" value="Genomic_DNA"/>
</dbReference>
<dbReference type="EMBL" id="DP000010">
    <property type="protein sequence ID" value="ABA92560.1"/>
    <property type="molecule type" value="Genomic_DNA"/>
</dbReference>
<dbReference type="EMBL" id="AP014967">
    <property type="status" value="NOT_ANNOTATED_CDS"/>
    <property type="molecule type" value="Genomic_DNA"/>
</dbReference>
<dbReference type="SMR" id="Q53N47"/>
<dbReference type="STRING" id="39947.Q53N47"/>
<dbReference type="PaxDb" id="39947-Q53N47"/>
<dbReference type="eggNOG" id="KOG1051">
    <property type="taxonomic scope" value="Eukaryota"/>
</dbReference>
<dbReference type="HOGENOM" id="CLU_005070_9_1_1"/>
<dbReference type="InParanoid" id="Q53N47"/>
<dbReference type="Proteomes" id="UP000000763">
    <property type="component" value="Chromosome 11"/>
</dbReference>
<dbReference type="Proteomes" id="UP000059680">
    <property type="component" value="Chromosome 11"/>
</dbReference>
<dbReference type="GO" id="GO:0009507">
    <property type="term" value="C:chloroplast"/>
    <property type="evidence" value="ECO:0007669"/>
    <property type="project" value="UniProtKB-SubCell"/>
</dbReference>
<dbReference type="GO" id="GO:0005524">
    <property type="term" value="F:ATP binding"/>
    <property type="evidence" value="ECO:0007669"/>
    <property type="project" value="UniProtKB-KW"/>
</dbReference>
<dbReference type="GO" id="GO:0016887">
    <property type="term" value="F:ATP hydrolysis activity"/>
    <property type="evidence" value="ECO:0007669"/>
    <property type="project" value="InterPro"/>
</dbReference>
<dbReference type="CDD" id="cd00009">
    <property type="entry name" value="AAA"/>
    <property type="match status" value="1"/>
</dbReference>
<dbReference type="CDD" id="cd19499">
    <property type="entry name" value="RecA-like_ClpB_Hsp104-like"/>
    <property type="match status" value="1"/>
</dbReference>
<dbReference type="FunFam" id="3.40.50.300:FF:000025">
    <property type="entry name" value="ATP-dependent Clp protease subunit"/>
    <property type="match status" value="1"/>
</dbReference>
<dbReference type="FunFam" id="3.40.50.300:FF:000010">
    <property type="entry name" value="Chaperone clpB 1, putative"/>
    <property type="match status" value="1"/>
</dbReference>
<dbReference type="Gene3D" id="1.10.8.60">
    <property type="match status" value="2"/>
</dbReference>
<dbReference type="Gene3D" id="3.40.50.300">
    <property type="entry name" value="P-loop containing nucleotide triphosphate hydrolases"/>
    <property type="match status" value="2"/>
</dbReference>
<dbReference type="Gene3D" id="4.10.860.10">
    <property type="entry name" value="UVR domain"/>
    <property type="match status" value="1"/>
</dbReference>
<dbReference type="InterPro" id="IPR003593">
    <property type="entry name" value="AAA+_ATPase"/>
</dbReference>
<dbReference type="InterPro" id="IPR003959">
    <property type="entry name" value="ATPase_AAA_core"/>
</dbReference>
<dbReference type="InterPro" id="IPR019489">
    <property type="entry name" value="Clp_ATPase_C"/>
</dbReference>
<dbReference type="InterPro" id="IPR001270">
    <property type="entry name" value="ClpA/B"/>
</dbReference>
<dbReference type="InterPro" id="IPR018368">
    <property type="entry name" value="ClpA/B_CS1"/>
</dbReference>
<dbReference type="InterPro" id="IPR028299">
    <property type="entry name" value="ClpA/B_CS2"/>
</dbReference>
<dbReference type="InterPro" id="IPR041546">
    <property type="entry name" value="ClpA/ClpB_AAA_lid"/>
</dbReference>
<dbReference type="InterPro" id="IPR050130">
    <property type="entry name" value="ClpA_ClpB"/>
</dbReference>
<dbReference type="InterPro" id="IPR027417">
    <property type="entry name" value="P-loop_NTPase"/>
</dbReference>
<dbReference type="PANTHER" id="PTHR11638">
    <property type="entry name" value="ATP-DEPENDENT CLP PROTEASE"/>
    <property type="match status" value="1"/>
</dbReference>
<dbReference type="PANTHER" id="PTHR11638:SF155">
    <property type="entry name" value="CHAPERONE PROTEIN CLPC1, CHLOROPLASTIC-LIKE"/>
    <property type="match status" value="1"/>
</dbReference>
<dbReference type="Pfam" id="PF00004">
    <property type="entry name" value="AAA"/>
    <property type="match status" value="1"/>
</dbReference>
<dbReference type="Pfam" id="PF07724">
    <property type="entry name" value="AAA_2"/>
    <property type="match status" value="1"/>
</dbReference>
<dbReference type="Pfam" id="PF17871">
    <property type="entry name" value="AAA_lid_9"/>
    <property type="match status" value="1"/>
</dbReference>
<dbReference type="Pfam" id="PF10431">
    <property type="entry name" value="ClpB_D2-small"/>
    <property type="match status" value="1"/>
</dbReference>
<dbReference type="PRINTS" id="PR00300">
    <property type="entry name" value="CLPPROTEASEA"/>
</dbReference>
<dbReference type="SMART" id="SM00382">
    <property type="entry name" value="AAA"/>
    <property type="match status" value="2"/>
</dbReference>
<dbReference type="SMART" id="SM01086">
    <property type="entry name" value="ClpB_D2-small"/>
    <property type="match status" value="1"/>
</dbReference>
<dbReference type="SUPFAM" id="SSF52540">
    <property type="entry name" value="P-loop containing nucleoside triphosphate hydrolases"/>
    <property type="match status" value="2"/>
</dbReference>
<dbReference type="PROSITE" id="PS00870">
    <property type="entry name" value="CLPAB_1"/>
    <property type="match status" value="1"/>
</dbReference>
<dbReference type="PROSITE" id="PS00871">
    <property type="entry name" value="CLPAB_2"/>
    <property type="match status" value="1"/>
</dbReference>
<keyword id="KW-0067">ATP-binding</keyword>
<keyword id="KW-0143">Chaperone</keyword>
<keyword id="KW-0150">Chloroplast</keyword>
<keyword id="KW-0547">Nucleotide-binding</keyword>
<keyword id="KW-0934">Plastid</keyword>
<keyword id="KW-1185">Reference proteome</keyword>
<keyword id="KW-0677">Repeat</keyword>
<keyword id="KW-0809">Transit peptide</keyword>
<feature type="transit peptide" description="Chloroplast" evidence="2">
    <location>
        <begin position="1"/>
        <end status="unknown"/>
    </location>
</feature>
<feature type="chain" id="PRO_0000412582" description="Chaperone protein ClpC4, chloroplastic">
    <location>
        <begin status="unknown"/>
        <end position="918"/>
    </location>
</feature>
<feature type="region of interest" description="I" evidence="1">
    <location>
        <begin position="266"/>
        <end position="515"/>
    </location>
</feature>
<feature type="region of interest" description="II" evidence="1">
    <location>
        <begin position="579"/>
        <end position="774"/>
    </location>
</feature>
<feature type="binding site" evidence="2">
    <location>
        <begin position="311"/>
        <end position="318"/>
    </location>
    <ligand>
        <name>ATP</name>
        <dbReference type="ChEBI" id="CHEBI:30616"/>
    </ligand>
</feature>
<feature type="binding site" evidence="2">
    <location>
        <begin position="653"/>
        <end position="660"/>
    </location>
    <ligand>
        <name>ATP</name>
        <dbReference type="ChEBI" id="CHEBI:30616"/>
    </ligand>
</feature>
<organism>
    <name type="scientific">Oryza sativa subsp. japonica</name>
    <name type="common">Rice</name>
    <dbReference type="NCBI Taxonomy" id="39947"/>
    <lineage>
        <taxon>Eukaryota</taxon>
        <taxon>Viridiplantae</taxon>
        <taxon>Streptophyta</taxon>
        <taxon>Embryophyta</taxon>
        <taxon>Tracheophyta</taxon>
        <taxon>Spermatophyta</taxon>
        <taxon>Magnoliopsida</taxon>
        <taxon>Liliopsida</taxon>
        <taxon>Poales</taxon>
        <taxon>Poaceae</taxon>
        <taxon>BOP clade</taxon>
        <taxon>Oryzoideae</taxon>
        <taxon>Oryzeae</taxon>
        <taxon>Oryzinae</taxon>
        <taxon>Oryza</taxon>
        <taxon>Oryza sativa</taxon>
    </lineage>
</organism>
<accession>Q53N47</accession>
<name>CLPC4_ORYSJ</name>
<sequence length="918" mass="100993">MPCAMLVAAAVEVAVPTLAEAAALGAIGAILAGPLMQPTKVRSPVRVRNSNLKCHGTKMRSPSMVSMSQSQRIKIPSYVGLSTVHTPALLTPVISSRSTRTFQKTAKTIQERSHAVMQIPEFTPGTGLRSTNAIQRTTEVLQRHSHVGLRQPHAGRLREMHTASGRPVIGLTPTIVSQKTTKVPKQPRFVARAIDNFSREVMNAIAVAHDEAQYIAHLTIGSTNILLSLISQYICIFLLEIILNKAYKMFRAAVRRATRGAKLATLMEYGTNLTKLAEEGKLDPVVGRQKQIDHVVQILSRRTKNNPCLIGEPGVGKTAIAEGLAQLIATGDVPETIQQKTVISLDMGLLLAGTKYRGELEERLKNILEEIKQNGEIILFLDEVHTLVTAGSAEGAIDAANIFKPALARGELQCIGATTINEYRKHIEKDAALERRFQPVKIPESTVDETVGILKGLRERYQGHHKVQYTDEALVAAAELSHKHIRDRFLPDKAIDLMDEAGSIVRLRNAQCKPSKKVNDLEAELKKTLKEKNDAISIQNFRRAKQLRDHELQLRTNISALTDKKTQMMEPDAIAMPVVTEDDVRHAISRWTGVPLHKVSMDESRKLLKLEEALHRRVVGQGEAVAAVSRAIRRARLGLKHPGRPVASLVFAGPTGVGKSELAKALAAYYYGSSESEEAAMVRLDMSEYMEKHAVARLVGSPPGYVWHGEGGQLTEAVRRRPHAVVLLDEVEKAHRDVFDLLLQVLDDGRLTDGKGRTVDFKNTLIVMTTNIGSSLIVNNGGDGAAAAGRIKNTVTDEMKRHFRPEFLNRLDEVIMFQPLTELEVGKIAGIMLEEFAGRVREKGIKLKVTDKFRELVVEEGFDPSYGARPLRRAVVRLLEDTLAEKMLAGEVREGDSVIVDADSAGNAVVRRSNAMPA</sequence>
<protein>
    <recommendedName>
        <fullName>Chaperone protein ClpC4, chloroplastic</fullName>
    </recommendedName>
    <alternativeName>
        <fullName>ATP-dependent Clp protease ATP-binding subunit ClpC homolog 4</fullName>
    </alternativeName>
    <alternativeName>
        <fullName>Casein lytic proteinase C4</fullName>
    </alternativeName>
</protein>
<evidence type="ECO:0000250" key="1"/>
<evidence type="ECO:0000255" key="2"/>
<evidence type="ECO:0000305" key="3"/>
<gene>
    <name type="primary">CPLC4</name>
    <name type="ordered locus">Os11g0269000</name>
    <name type="ordered locus">LOC_Os11g16770</name>
</gene>
<proteinExistence type="inferred from homology"/>